<comment type="function">
    <text evidence="1">Contributes to K(+)/H(+) antiport activity by supporting proton efflux to control proton extrusion and homeostasis in chloroplasts in a light-dependent manner to modulate photosynthesis. Prevents excessive induction of non-photochemical quenching (NPQ) under continuous-light conditions. Indirectly promotes efficient inorganic carbon uptake into chloroplasts.</text>
</comment>
<comment type="catalytic activity">
    <reaction evidence="1">
        <text>K(+)(in) + H(+)(out) = K(+)(out) + H(+)(in)</text>
        <dbReference type="Rhea" id="RHEA:29467"/>
        <dbReference type="ChEBI" id="CHEBI:15378"/>
        <dbReference type="ChEBI" id="CHEBI:29103"/>
    </reaction>
</comment>
<comment type="subcellular location">
    <subcellularLocation>
        <location evidence="1">Plastid</location>
        <location evidence="1">Chloroplast inner membrane</location>
        <topology evidence="1">Multi-pass membrane protein</topology>
    </subcellularLocation>
</comment>
<comment type="similarity">
    <text evidence="1 2">Belongs to the CemA family.</text>
</comment>
<accession>Q49KY6</accession>
<geneLocation type="chloroplast"/>
<dbReference type="EMBL" id="AY780259">
    <property type="protein sequence ID" value="AAX21041.1"/>
    <property type="molecule type" value="Genomic_DNA"/>
</dbReference>
<dbReference type="RefSeq" id="YP_636311.1">
    <property type="nucleotide sequence ID" value="NC_008115.1"/>
</dbReference>
<dbReference type="GeneID" id="4108464"/>
<dbReference type="GO" id="GO:0009706">
    <property type="term" value="C:chloroplast inner membrane"/>
    <property type="evidence" value="ECO:0007669"/>
    <property type="project" value="UniProtKB-SubCell"/>
</dbReference>
<dbReference type="GO" id="GO:0015297">
    <property type="term" value="F:antiporter activity"/>
    <property type="evidence" value="ECO:0007669"/>
    <property type="project" value="UniProtKB-KW"/>
</dbReference>
<dbReference type="GO" id="GO:0015078">
    <property type="term" value="F:proton transmembrane transporter activity"/>
    <property type="evidence" value="ECO:0007669"/>
    <property type="project" value="UniProtKB-UniRule"/>
</dbReference>
<dbReference type="GO" id="GO:0006813">
    <property type="term" value="P:potassium ion transport"/>
    <property type="evidence" value="ECO:0007669"/>
    <property type="project" value="UniProtKB-UniRule"/>
</dbReference>
<dbReference type="HAMAP" id="MF_01308">
    <property type="entry name" value="CemA_PxcA"/>
    <property type="match status" value="1"/>
</dbReference>
<dbReference type="InterPro" id="IPR004282">
    <property type="entry name" value="CemA"/>
</dbReference>
<dbReference type="PANTHER" id="PTHR33650:SF2">
    <property type="entry name" value="CHLOROPLAST ENVELOPE MEMBRANE PROTEIN"/>
    <property type="match status" value="1"/>
</dbReference>
<dbReference type="PANTHER" id="PTHR33650">
    <property type="entry name" value="CHLOROPLAST ENVELOPE MEMBRANE PROTEIN-RELATED"/>
    <property type="match status" value="1"/>
</dbReference>
<dbReference type="Pfam" id="PF03040">
    <property type="entry name" value="CemA"/>
    <property type="match status" value="1"/>
</dbReference>
<evidence type="ECO:0000255" key="1">
    <source>
        <dbReference type="HAMAP-Rule" id="MF_01308"/>
    </source>
</evidence>
<evidence type="ECO:0000305" key="2"/>
<sequence length="229" mass="27050">MVKKKAFLPLLYLTSIVFLPWWISLSFNKSLEFWITNWWNTRQSETFLTDIQEKSILEKFIELEELLLLDEMIKEYPETHLQTLRIGIHKETIQLIKMHNEDHIHMILHLSTNITSFIILSGYSILGNEELAILNSWVQEFLYNLSDTIKAFSILLLTDLCIGFHSPHGWELMIGYVYKDFGFAHNDQIISGLVSTFPVILDTIFKYWIFRYLNRISPSLVVIYHSMND</sequence>
<keyword id="KW-0050">Antiport</keyword>
<keyword id="KW-0150">Chloroplast</keyword>
<keyword id="KW-0375">Hydrogen ion transport</keyword>
<keyword id="KW-0406">Ion transport</keyword>
<keyword id="KW-0472">Membrane</keyword>
<keyword id="KW-0934">Plastid</keyword>
<keyword id="KW-1001">Plastid inner membrane</keyword>
<keyword id="KW-0630">Potassium</keyword>
<keyword id="KW-0633">Potassium transport</keyword>
<keyword id="KW-0812">Transmembrane</keyword>
<keyword id="KW-1133">Transmembrane helix</keyword>
<keyword id="KW-0813">Transport</keyword>
<feature type="chain" id="PRO_0000275237" description="Potassium/proton antiporter CemA">
    <location>
        <begin position="1"/>
        <end position="229"/>
    </location>
</feature>
<feature type="transmembrane region" description="Helical" evidence="1">
    <location>
        <begin position="7"/>
        <end position="27"/>
    </location>
</feature>
<feature type="transmembrane region" description="Helical" evidence="1">
    <location>
        <begin position="106"/>
        <end position="126"/>
    </location>
</feature>
<feature type="transmembrane region" description="Helical" evidence="1">
    <location>
        <begin position="189"/>
        <end position="209"/>
    </location>
</feature>
<reference key="1">
    <citation type="journal article" date="2005" name="DNA Res.">
        <title>Complete nucleotide sequence of the chloroplast genome from the Tasmanian blue gum, Eucalyptus globulus (Myrtaceae).</title>
        <authorList>
            <person name="Steane D.A."/>
        </authorList>
    </citation>
    <scope>NUCLEOTIDE SEQUENCE [LARGE SCALE GENOMIC DNA]</scope>
</reference>
<protein>
    <recommendedName>
        <fullName evidence="1">Potassium/proton antiporter CemA</fullName>
    </recommendedName>
    <alternativeName>
        <fullName evidence="1">Chloroplast envelope membrane protein A</fullName>
        <shortName evidence="1">CemA</shortName>
    </alternativeName>
</protein>
<proteinExistence type="inferred from homology"/>
<gene>
    <name evidence="1" type="primary">cemA</name>
</gene>
<organism>
    <name type="scientific">Eucalyptus globulus subsp. globulus</name>
    <name type="common">Tasmanian blue gum</name>
    <dbReference type="NCBI Taxonomy" id="71271"/>
    <lineage>
        <taxon>Eukaryota</taxon>
        <taxon>Viridiplantae</taxon>
        <taxon>Streptophyta</taxon>
        <taxon>Embryophyta</taxon>
        <taxon>Tracheophyta</taxon>
        <taxon>Spermatophyta</taxon>
        <taxon>Magnoliopsida</taxon>
        <taxon>eudicotyledons</taxon>
        <taxon>Gunneridae</taxon>
        <taxon>Pentapetalae</taxon>
        <taxon>rosids</taxon>
        <taxon>malvids</taxon>
        <taxon>Myrtales</taxon>
        <taxon>Myrtaceae</taxon>
        <taxon>Myrtoideae</taxon>
        <taxon>Eucalypteae</taxon>
        <taxon>Eucalyptus</taxon>
    </lineage>
</organism>
<name>CEMA_EUCGG</name>